<dbReference type="EMBL" id="U00096">
    <property type="status" value="NOT_ANNOTATED_CDS"/>
    <property type="molecule type" value="Genomic_DNA"/>
</dbReference>
<dbReference type="EMBL" id="AP009048">
    <property type="protein sequence ID" value="BAA77888.1"/>
    <property type="molecule type" value="Genomic_DNA"/>
</dbReference>
<dbReference type="SMR" id="Q2EEP9"/>
<dbReference type="BioGRID" id="4259760">
    <property type="interactions" value="78"/>
</dbReference>
<dbReference type="FunCoup" id="Q2EEP9">
    <property type="interactions" value="36"/>
</dbReference>
<dbReference type="KEGG" id="ecj:JW0208"/>
<dbReference type="PATRIC" id="fig|83333.103.peg.969"/>
<dbReference type="eggNOG" id="COG5433">
    <property type="taxonomic scope" value="Bacteria"/>
</dbReference>
<dbReference type="HOGENOM" id="CLU_046404_7_3_6"/>
<dbReference type="InParanoid" id="Q2EEP9"/>
<dbReference type="OMA" id="MNCAMDE"/>
<dbReference type="Proteomes" id="UP000000625">
    <property type="component" value="Chromosome"/>
</dbReference>
<dbReference type="InterPro" id="IPR051698">
    <property type="entry name" value="Transposase_11-like"/>
</dbReference>
<dbReference type="PANTHER" id="PTHR30298">
    <property type="entry name" value="H REPEAT-ASSOCIATED PREDICTED TRANSPOSASE"/>
    <property type="match status" value="1"/>
</dbReference>
<dbReference type="PANTHER" id="PTHR30298:SF0">
    <property type="entry name" value="PROTEIN YBFL-RELATED"/>
    <property type="match status" value="1"/>
</dbReference>
<organism>
    <name type="scientific">Escherichia coli (strain K12)</name>
    <dbReference type="NCBI Taxonomy" id="83333"/>
    <lineage>
        <taxon>Bacteria</taxon>
        <taxon>Pseudomonadati</taxon>
        <taxon>Pseudomonadota</taxon>
        <taxon>Gammaproteobacteria</taxon>
        <taxon>Enterobacterales</taxon>
        <taxon>Enterobacteriaceae</taxon>
        <taxon>Escherichia</taxon>
    </lineage>
</organism>
<evidence type="ECO:0000305" key="1"/>
<accession>Q2EEP9</accession>
<accession>Q47678</accession>
<name>YAFF_ECOLI</name>
<protein>
    <recommendedName>
        <fullName>Putative uncharacterized protein YafF</fullName>
    </recommendedName>
</protein>
<comment type="caution">
    <text evidence="1">Could be the product of a pseudogene.</text>
</comment>
<keyword id="KW-1185">Reference proteome</keyword>
<feature type="chain" id="PRO_0000252166" description="Putative uncharacterized protein YafF">
    <location>
        <begin position="1"/>
        <end position="62"/>
    </location>
</feature>
<proteinExistence type="uncertain"/>
<sequence length="62" mass="6953">MNEDDYKIRRGNAAELFSGIRHIAINILTNEKVFKAGLRRKMRKAAMDRNYLASVLAGSGLS</sequence>
<reference key="1">
    <citation type="journal article" date="1997" name="Science">
        <title>The complete genome sequence of Escherichia coli K-12.</title>
        <authorList>
            <person name="Blattner F.R."/>
            <person name="Plunkett G. III"/>
            <person name="Bloch C.A."/>
            <person name="Perna N.T."/>
            <person name="Burland V."/>
            <person name="Riley M."/>
            <person name="Collado-Vides J."/>
            <person name="Glasner J.D."/>
            <person name="Rode C.K."/>
            <person name="Mayhew G.F."/>
            <person name="Gregor J."/>
            <person name="Davis N.W."/>
            <person name="Kirkpatrick H.A."/>
            <person name="Goeden M.A."/>
            <person name="Rose D.J."/>
            <person name="Mau B."/>
            <person name="Shao Y."/>
        </authorList>
    </citation>
    <scope>NUCLEOTIDE SEQUENCE [LARGE SCALE GENOMIC DNA]</scope>
    <source>
        <strain>K12 / MG1655 / ATCC 47076</strain>
    </source>
</reference>
<reference key="2">
    <citation type="journal article" date="2006" name="Mol. Syst. Biol.">
        <title>Highly accurate genome sequences of Escherichia coli K-12 strains MG1655 and W3110.</title>
        <authorList>
            <person name="Hayashi K."/>
            <person name="Morooka N."/>
            <person name="Yamamoto Y."/>
            <person name="Fujita K."/>
            <person name="Isono K."/>
            <person name="Choi S."/>
            <person name="Ohtsubo E."/>
            <person name="Baba T."/>
            <person name="Wanner B.L."/>
            <person name="Mori H."/>
            <person name="Horiuchi T."/>
        </authorList>
    </citation>
    <scope>NUCLEOTIDE SEQUENCE [LARGE SCALE GENOMIC DNA]</scope>
    <source>
        <strain>K12 / W3110 / ATCC 27325 / DSM 5911</strain>
    </source>
</reference>
<gene>
    <name type="primary">yafF</name>
    <name type="ordered locus">b4503</name>
    <name type="ordered locus">JW0208</name>
</gene>